<evidence type="ECO:0000250" key="1">
    <source>
        <dbReference type="UniProtKB" id="O93801"/>
    </source>
</evidence>
<evidence type="ECO:0000269" key="2">
    <source>
    </source>
</evidence>
<evidence type="ECO:0000269" key="3">
    <source>
    </source>
</evidence>
<evidence type="ECO:0000269" key="4">
    <source>
    </source>
</evidence>
<evidence type="ECO:0000269" key="5">
    <source>
    </source>
</evidence>
<evidence type="ECO:0000269" key="6">
    <source>
    </source>
</evidence>
<evidence type="ECO:0000269" key="7">
    <source>
    </source>
</evidence>
<evidence type="ECO:0000303" key="8">
    <source>
    </source>
</evidence>
<evidence type="ECO:0000303" key="9">
    <source>
    </source>
</evidence>
<evidence type="ECO:0000305" key="10"/>
<evidence type="ECO:0000305" key="11">
    <source>
    </source>
</evidence>
<protein>
    <recommendedName>
        <fullName evidence="8">Abhydrolase domain-containing protein ACTT2</fullName>
        <ecNumber evidence="11">3.1.1.-</ecNumber>
    </recommendedName>
    <alternativeName>
        <fullName evidence="8">ACT-toxin biosynthesis protein 2</fullName>
    </alternativeName>
</protein>
<feature type="chain" id="PRO_0000444826" description="Abhydrolase domain-containing protein ACTT2">
    <location>
        <begin position="1"/>
        <end position="262"/>
    </location>
</feature>
<feature type="short sequence motif" description="Peroxisomal targeting signal type 1" evidence="1">
    <location>
        <begin position="260"/>
        <end position="262"/>
    </location>
</feature>
<name>ACTT2_ALTAL</name>
<organism>
    <name type="scientific">Alternaria alternata</name>
    <name type="common">Alternaria rot fungus</name>
    <name type="synonym">Torula alternata</name>
    <dbReference type="NCBI Taxonomy" id="5599"/>
    <lineage>
        <taxon>Eukaryota</taxon>
        <taxon>Fungi</taxon>
        <taxon>Dikarya</taxon>
        <taxon>Ascomycota</taxon>
        <taxon>Pezizomycotina</taxon>
        <taxon>Dothideomycetes</taxon>
        <taxon>Pleosporomycetidae</taxon>
        <taxon>Pleosporales</taxon>
        <taxon>Pleosporineae</taxon>
        <taxon>Pleosporaceae</taxon>
        <taxon>Alternaria</taxon>
        <taxon>Alternaria sect. Alternaria</taxon>
        <taxon>Alternaria alternata complex</taxon>
    </lineage>
</organism>
<keyword id="KW-0378">Hydrolase</keyword>
<keyword id="KW-0576">Peroxisome</keyword>
<keyword id="KW-0843">Virulence</keyword>
<proteinExistence type="evidence at transcript level"/>
<gene>
    <name evidence="8" type="primary">ACTT2</name>
</gene>
<sequence>MQQPIIGVGHSMGGCQIATLSVTSRRIFSTMILLDPAIGPPEMGLATLGLGQLTLRRRTQWLTREDAEKALRTSFSTWDPQVLDLLIKHSIHSDKQSVEMEDGPFSLVTGRYQELVNYIKPSFIRSGKVVGQELVHQTGPVDMYHMLGLVTCSTLYLCGGESTLSTPRARELWLSRTAELSYPKDPGEMRKVDERIVPDTGHFLPMEEPKECADIIADWIDKDECMIWNCHIGKQGKIWRDLSNTNRKMNAEVWMKYLQSKL</sequence>
<dbReference type="EC" id="3.1.1.-" evidence="11"/>
<dbReference type="EMBL" id="AB432914">
    <property type="protein sequence ID" value="BAI44321.1"/>
    <property type="molecule type" value="Genomic_DNA"/>
</dbReference>
<dbReference type="SMR" id="C9K1M7"/>
<dbReference type="ESTHER" id="altal-actt2">
    <property type="family name" value="MpaH"/>
</dbReference>
<dbReference type="VEuPathDB" id="FungiDB:CC77DRAFT_959939"/>
<dbReference type="PHI-base" id="PHI:2431"/>
<dbReference type="GO" id="GO:0005777">
    <property type="term" value="C:peroxisome"/>
    <property type="evidence" value="ECO:0007669"/>
    <property type="project" value="UniProtKB-SubCell"/>
</dbReference>
<dbReference type="GO" id="GO:0016787">
    <property type="term" value="F:hydrolase activity"/>
    <property type="evidence" value="ECO:0007669"/>
    <property type="project" value="UniProtKB-KW"/>
</dbReference>
<dbReference type="Gene3D" id="3.40.50.1820">
    <property type="entry name" value="alpha/beta hydrolase"/>
    <property type="match status" value="1"/>
</dbReference>
<dbReference type="InterPro" id="IPR000073">
    <property type="entry name" value="AB_hydrolase_1"/>
</dbReference>
<dbReference type="InterPro" id="IPR029058">
    <property type="entry name" value="AB_hydrolase_fold"/>
</dbReference>
<dbReference type="Pfam" id="PF12697">
    <property type="entry name" value="Abhydrolase_6"/>
    <property type="match status" value="1"/>
</dbReference>
<dbReference type="SUPFAM" id="SSF53474">
    <property type="entry name" value="alpha/beta-Hydrolases"/>
    <property type="match status" value="1"/>
</dbReference>
<reference key="1">
    <citation type="journal article" date="2000" name="Phytopathology">
        <title>Distribution and characterization of AKT homologs in the tangerine pathotype of Alternaria alternata.</title>
        <authorList>
            <person name="Masunaka A."/>
            <person name="Tanaka A."/>
            <person name="Tsuge T."/>
            <person name="Peever T.L."/>
            <person name="Timmer L.W."/>
            <person name="Yamamoto M."/>
            <person name="Yamamoto H."/>
            <person name="Akimitsu K."/>
        </authorList>
    </citation>
    <scope>NUCLEOTIDE SEQUENCE [GENOMIC DNA]</scope>
    <scope>FUNCTION</scope>
</reference>
<reference key="2">
    <citation type="journal article" date="2008" name="Mol. Plant Microbe Interact.">
        <title>Functional analysis of a multicopy host-selective ACT-toxin biosynthesis gene in the tangerine pathotype of Alternaria alternata using RNA silencing.</title>
        <authorList>
            <person name="Miyamoto Y."/>
            <person name="Masunaka A."/>
            <person name="Tsuge T."/>
            <person name="Yamamoto M."/>
            <person name="Ohtani K."/>
            <person name="Fukumoto T."/>
            <person name="Gomi K."/>
            <person name="Peever T.L."/>
            <person name="Akimitsu K."/>
        </authorList>
    </citation>
    <scope>FUNCTION</scope>
    <scope>DISRUPTION PHENOTYPE</scope>
    <scope>PATHWAY</scope>
    <source>
        <strain>SH20</strain>
    </source>
</reference>
<reference key="3">
    <citation type="journal article" date="2009" name="Phytopathology">
        <title>Function of genes encoding acyl-CoA synthetase and enoyl-CoA hydratase for host-selective act-toxin biosynthesis in the tangerine pathotype of Alternaria alternata.</title>
        <authorList>
            <person name="Miyamoto M."/>
            <person name="Ishii Y."/>
            <person name="Honda A."/>
            <person name="Masunaka A."/>
            <person name="Tsuge T."/>
            <person name="Yamamoto M."/>
            <person name="Ohtani K."/>
            <person name="Fukumoto T."/>
            <person name="Gomi K."/>
            <person name="Peever T.L."/>
            <person name="Akimitsu K."/>
        </authorList>
    </citation>
    <scope>FUNCTION</scope>
    <source>
        <strain>SH20</strain>
    </source>
</reference>
<reference key="4">
    <citation type="journal article" date="2010" name="Phytopathology">
        <title>Role of the host-selective ACT-toxin synthesis gene ACTTS2 encoding an enoyl-reductase in pathogenicity of the tangerine pathotype of Alternaria alternata.</title>
        <authorList>
            <person name="Ajiro N."/>
            <person name="Miyamoto Y."/>
            <person name="Masunaka A."/>
            <person name="Tsuge T."/>
            <person name="Yamamoto M."/>
            <person name="Ohtani K."/>
            <person name="Fukumoto T."/>
            <person name="Gomi K."/>
            <person name="Peever T.L."/>
            <person name="Izumi Y."/>
            <person name="Tada Y."/>
            <person name="Akimitsu K."/>
        </authorList>
    </citation>
    <scope>FUNCTION</scope>
    <source>
        <strain>SH20</strain>
    </source>
</reference>
<reference key="5">
    <citation type="journal article" date="2010" name="Mol. Plant Microbe Interact.">
        <title>ACTTS3 encoding a polyketide synthase is essential for the biosynthesis of ACT-toxin and pathogenicity in the tangerine pathotype of Alternaria alternata.</title>
        <authorList>
            <person name="Miyamoto Y."/>
            <person name="Masunaka A."/>
            <person name="Tsuge T."/>
            <person name="Yamamoto M."/>
            <person name="Ohtani K."/>
            <person name="Fukumoto T."/>
            <person name="Gomi K."/>
            <person name="Peever T.L."/>
            <person name="Tada Y."/>
            <person name="Ichimura K."/>
            <person name="Akimitsu K."/>
        </authorList>
    </citation>
    <scope>FUNCTION</scope>
    <source>
        <strain>SH20</strain>
    </source>
</reference>
<reference key="6">
    <citation type="journal article" date="2013" name="FEMS Microbiol. Rev.">
        <title>Host-selective toxins produced by the plant pathogenic fungus Alternaria alternata.</title>
        <authorList>
            <person name="Tsuge T."/>
            <person name="Harimoto Y."/>
            <person name="Akimitsu K."/>
            <person name="Ohtani K."/>
            <person name="Kodama M."/>
            <person name="Akagi Y."/>
            <person name="Egusa M."/>
            <person name="Yamamoto M."/>
            <person name="Otani H."/>
        </authorList>
    </citation>
    <scope>REVIEW ON HOST-SELECTIVE TOXINS</scope>
</reference>
<reference key="7">
    <citation type="journal article" date="2018" name="Front. Microbiol.">
        <title>Csn5 is required for the conidiogenesis and pathogenesis of the Alternaria alternata tangerine pathotype.</title>
        <authorList>
            <person name="Wang M."/>
            <person name="Yang X."/>
            <person name="Ruan R."/>
            <person name="Fu H."/>
            <person name="Li H."/>
        </authorList>
    </citation>
    <scope>INDUCTION</scope>
</reference>
<comment type="function">
    <text evidence="2 3 4 5 6 9">Abhydrolase domain-containing protein; part of the gene clusters that mediate the biosynthesis of the host-selective toxins (HSTs) ACT-toxins responsible for brown spot of tangerine disease by the tangerine pathotype which affects tangerines and mandarins (PubMed:18944496, PubMed:18986255). ACT-toxins consist of three moieties, 9,10-epoxy-8-hydroxy-9-methyl-decatrienoic acid (EDA), valine and a polyketide (PubMed:22846083). ACT-toxin I is toxic to both citrus and pear; toxin II the 5''-deoxy derivative of ACT-toxin I, is highly toxic to pear and slightly toxic to citrus (PubMed:22846083). On cellular level, ACT-toxins affect plasma membrane of susceptible cells and cause a sudden increase in loss of K(+) after a few minutes of toxin treatment (PubMed:22846083). The acyl-CoA ligase ACTT1, the hydrolase ACTT2, the enoyl-CoA hydratases ACTT3 and ACTT6, and the acyl-CoA synthetase ACTT5 are all involved in the biosynthesis of the AK-, AF- and ACT-toxin common 9,10-epoxy-8-hydroxy-9-methyl-decatrienoic acid (EDA) structural moiety (PubMed:18944496, PubMed:18986255, PubMed:19271978). The exact role of each enzyme, and of additional enzymes identified within the AF-toxin clusters have still to be determined (PubMed:18944496, PubMed:18986255, PubMed:19271978). On the other hand, ACTTS1 to ACTTS4 are specific to the tangerine pathotype (PubMed:22846083). The function of ACTTS3 is to elongate the polyketide chain portion of ACT-toxin that is unique to this toxin (PubMed:20192828). The enoyl-reductase ACTTS2 might complement the missing enoyl-reductase (ER) domain in ACTTS3 in the synthesis of the polyketide portion of ACT-toxin (PubMed:20055645). The roles of the nonribosomal peptide synthetases-related proteins ACTTS1 and ACTTS4 have also still not been elucidated (PubMed:22846083).</text>
</comment>
<comment type="pathway">
    <text evidence="3">Mycotoxin biosynthesis.</text>
</comment>
<comment type="subcellular location">
    <subcellularLocation>
        <location evidence="1">Peroxisome</location>
    </subcellularLocation>
    <text evidence="1">The peroxisomal location requires the C-terminal tripeptide peroxisomal targeting signal.</text>
</comment>
<comment type="induction">
    <text evidence="7">Expression is positively regulated by CSN5 during infection.</text>
</comment>
<comment type="disruption phenotype">
    <text evidence="3">Abolishes the production of ACT-toxin and impairs the formation of lesions on leaves sprayed with conidia (PubMed:18986255). Does not affect growth rate of cultures, sporulation, and spore germination (PubMed:18986255).</text>
</comment>
<comment type="miscellaneous">
    <text evidence="3">Gene clusters encoding host-selective toxins (HSTs) are localized on conditionally dispensable chromosomes (CDCs), also called supernumerary chromosomes, where they are present in multiple copies (PubMed:18986255). The CDCs are not essential for saprophytic growth but controls host-selective pathogenicity (PubMed:18986255). Although conventional disruption of ACTT2 could not be accomplished due to the high number of the copies identified in the genome, the high sequence identity among these copies of ACTT2 is likely an advantage for RNA silencing, because it allows knockdown of all copies of this gene simultaneously (PubMed:18986255).</text>
</comment>
<comment type="similarity">
    <text evidence="10">Belongs to the AB hydrolase superfamily. AKT2 hydrolase family.</text>
</comment>
<accession>C9K1M7</accession>